<feature type="chain" id="PRO_1000004286" description="Oligoribonuclease">
    <location>
        <begin position="1"/>
        <end position="181"/>
    </location>
</feature>
<feature type="domain" description="Exonuclease" evidence="1">
    <location>
        <begin position="8"/>
        <end position="171"/>
    </location>
</feature>
<feature type="active site" evidence="1">
    <location>
        <position position="129"/>
    </location>
</feature>
<comment type="function">
    <text evidence="1">3'-to-5' exoribonuclease specific for small oligoribonucleotides.</text>
</comment>
<comment type="subcellular location">
    <subcellularLocation>
        <location evidence="1">Cytoplasm</location>
    </subcellularLocation>
</comment>
<comment type="similarity">
    <text evidence="1">Belongs to the oligoribonuclease family.</text>
</comment>
<sequence>MAVDANNLIWVDLEMTGLEPDVDRVIEIATLVTDQELNIIAQGPVLAIYQTDEVLAGMDDWNQKHHGESGLVDRVRASKCSEQDAIAQTIDFLAQYVPKGASPMCGNSIGQDRRFLNKYMLELEEFFHYRNIDVSTVKELVRRWSPETMNGFSKKNTHQALEDIKESIAEMQFYRKEVFKI</sequence>
<keyword id="KW-0963">Cytoplasm</keyword>
<keyword id="KW-0269">Exonuclease</keyword>
<keyword id="KW-0378">Hydrolase</keyword>
<keyword id="KW-0540">Nuclease</keyword>
<keyword id="KW-1185">Reference proteome</keyword>
<gene>
    <name evidence="1" type="primary">orn</name>
    <name type="ordered locus">Sfri_3317</name>
</gene>
<proteinExistence type="inferred from homology"/>
<accession>Q07XW1</accession>
<dbReference type="EC" id="3.1.15.-" evidence="1"/>
<dbReference type="EMBL" id="CP000447">
    <property type="protein sequence ID" value="ABI73153.1"/>
    <property type="molecule type" value="Genomic_DNA"/>
</dbReference>
<dbReference type="RefSeq" id="WP_011638756.1">
    <property type="nucleotide sequence ID" value="NC_008345.1"/>
</dbReference>
<dbReference type="SMR" id="Q07XW1"/>
<dbReference type="STRING" id="318167.Sfri_3317"/>
<dbReference type="KEGG" id="sfr:Sfri_3317"/>
<dbReference type="eggNOG" id="COG1949">
    <property type="taxonomic scope" value="Bacteria"/>
</dbReference>
<dbReference type="HOGENOM" id="CLU_064761_2_0_6"/>
<dbReference type="OrthoDB" id="9801329at2"/>
<dbReference type="Proteomes" id="UP000000684">
    <property type="component" value="Chromosome"/>
</dbReference>
<dbReference type="GO" id="GO:0005737">
    <property type="term" value="C:cytoplasm"/>
    <property type="evidence" value="ECO:0007669"/>
    <property type="project" value="UniProtKB-SubCell"/>
</dbReference>
<dbReference type="GO" id="GO:0000175">
    <property type="term" value="F:3'-5'-RNA exonuclease activity"/>
    <property type="evidence" value="ECO:0007669"/>
    <property type="project" value="InterPro"/>
</dbReference>
<dbReference type="GO" id="GO:0003676">
    <property type="term" value="F:nucleic acid binding"/>
    <property type="evidence" value="ECO:0007669"/>
    <property type="project" value="InterPro"/>
</dbReference>
<dbReference type="GO" id="GO:0006259">
    <property type="term" value="P:DNA metabolic process"/>
    <property type="evidence" value="ECO:0007669"/>
    <property type="project" value="UniProtKB-ARBA"/>
</dbReference>
<dbReference type="CDD" id="cd06135">
    <property type="entry name" value="Orn"/>
    <property type="match status" value="1"/>
</dbReference>
<dbReference type="FunFam" id="3.30.420.10:FF:000003">
    <property type="entry name" value="Oligoribonuclease"/>
    <property type="match status" value="1"/>
</dbReference>
<dbReference type="Gene3D" id="3.30.420.10">
    <property type="entry name" value="Ribonuclease H-like superfamily/Ribonuclease H"/>
    <property type="match status" value="1"/>
</dbReference>
<dbReference type="HAMAP" id="MF_00045">
    <property type="entry name" value="Oligoribonuclease"/>
    <property type="match status" value="1"/>
</dbReference>
<dbReference type="InterPro" id="IPR013520">
    <property type="entry name" value="Exonuclease_RNaseT/DNA_pol3"/>
</dbReference>
<dbReference type="InterPro" id="IPR022894">
    <property type="entry name" value="Oligoribonuclease"/>
</dbReference>
<dbReference type="InterPro" id="IPR012337">
    <property type="entry name" value="RNaseH-like_sf"/>
</dbReference>
<dbReference type="InterPro" id="IPR036397">
    <property type="entry name" value="RNaseH_sf"/>
</dbReference>
<dbReference type="NCBIfam" id="NF003765">
    <property type="entry name" value="PRK05359.1"/>
    <property type="match status" value="1"/>
</dbReference>
<dbReference type="PANTHER" id="PTHR11046">
    <property type="entry name" value="OLIGORIBONUCLEASE, MITOCHONDRIAL"/>
    <property type="match status" value="1"/>
</dbReference>
<dbReference type="PANTHER" id="PTHR11046:SF0">
    <property type="entry name" value="OLIGORIBONUCLEASE, MITOCHONDRIAL"/>
    <property type="match status" value="1"/>
</dbReference>
<dbReference type="Pfam" id="PF00929">
    <property type="entry name" value="RNase_T"/>
    <property type="match status" value="1"/>
</dbReference>
<dbReference type="SMART" id="SM00479">
    <property type="entry name" value="EXOIII"/>
    <property type="match status" value="1"/>
</dbReference>
<dbReference type="SUPFAM" id="SSF53098">
    <property type="entry name" value="Ribonuclease H-like"/>
    <property type="match status" value="1"/>
</dbReference>
<reference key="1">
    <citation type="submission" date="2006-08" db="EMBL/GenBank/DDBJ databases">
        <title>Complete sequence of Shewanella frigidimarina NCIMB 400.</title>
        <authorList>
            <consortium name="US DOE Joint Genome Institute"/>
            <person name="Copeland A."/>
            <person name="Lucas S."/>
            <person name="Lapidus A."/>
            <person name="Barry K."/>
            <person name="Detter J.C."/>
            <person name="Glavina del Rio T."/>
            <person name="Hammon N."/>
            <person name="Israni S."/>
            <person name="Dalin E."/>
            <person name="Tice H."/>
            <person name="Pitluck S."/>
            <person name="Fredrickson J.K."/>
            <person name="Kolker E."/>
            <person name="McCuel L.A."/>
            <person name="DiChristina T."/>
            <person name="Nealson K.H."/>
            <person name="Newman D."/>
            <person name="Tiedje J.M."/>
            <person name="Zhou J."/>
            <person name="Romine M.F."/>
            <person name="Culley D.E."/>
            <person name="Serres M."/>
            <person name="Chertkov O."/>
            <person name="Brettin T."/>
            <person name="Bruce D."/>
            <person name="Han C."/>
            <person name="Tapia R."/>
            <person name="Gilna P."/>
            <person name="Schmutz J."/>
            <person name="Larimer F."/>
            <person name="Land M."/>
            <person name="Hauser L."/>
            <person name="Kyrpides N."/>
            <person name="Mikhailova N."/>
            <person name="Richardson P."/>
        </authorList>
    </citation>
    <scope>NUCLEOTIDE SEQUENCE [LARGE SCALE GENOMIC DNA]</scope>
    <source>
        <strain>NCIMB 400</strain>
    </source>
</reference>
<protein>
    <recommendedName>
        <fullName evidence="1">Oligoribonuclease</fullName>
        <ecNumber evidence="1">3.1.15.-</ecNumber>
    </recommendedName>
</protein>
<evidence type="ECO:0000255" key="1">
    <source>
        <dbReference type="HAMAP-Rule" id="MF_00045"/>
    </source>
</evidence>
<name>ORN_SHEFN</name>
<organism>
    <name type="scientific">Shewanella frigidimarina (strain NCIMB 400)</name>
    <dbReference type="NCBI Taxonomy" id="318167"/>
    <lineage>
        <taxon>Bacteria</taxon>
        <taxon>Pseudomonadati</taxon>
        <taxon>Pseudomonadota</taxon>
        <taxon>Gammaproteobacteria</taxon>
        <taxon>Alteromonadales</taxon>
        <taxon>Shewanellaceae</taxon>
        <taxon>Shewanella</taxon>
    </lineage>
</organism>